<gene>
    <name type="ORF">DDB_G0282013</name>
</gene>
<protein>
    <recommendedName>
        <fullName>Putative uncharacterized protein DDB_G0282013</fullName>
    </recommendedName>
</protein>
<accession>Q54T44</accession>
<name>Y5087_DICDI</name>
<proteinExistence type="predicted"/>
<keyword id="KW-1185">Reference proteome</keyword>
<sequence length="99" mass="10844">MTIIGNLSCINHVGLGNFSKKSSNYSNFSNSISFGKNQNSDQIIDAVLGLIIRDGGIVDGLFGNGSSLNKFFSQFFGKSIYKNRSLGNNTKLYKKIKKL</sequence>
<organism>
    <name type="scientific">Dictyostelium discoideum</name>
    <name type="common">Social amoeba</name>
    <dbReference type="NCBI Taxonomy" id="44689"/>
    <lineage>
        <taxon>Eukaryota</taxon>
        <taxon>Amoebozoa</taxon>
        <taxon>Evosea</taxon>
        <taxon>Eumycetozoa</taxon>
        <taxon>Dictyostelia</taxon>
        <taxon>Dictyosteliales</taxon>
        <taxon>Dictyosteliaceae</taxon>
        <taxon>Dictyostelium</taxon>
    </lineage>
</organism>
<feature type="chain" id="PRO_0000351237" description="Putative uncharacterized protein DDB_G0282013">
    <location>
        <begin position="1"/>
        <end position="99"/>
    </location>
</feature>
<dbReference type="EMBL" id="AAFI02000044">
    <property type="protein sequence ID" value="EAL66428.1"/>
    <property type="molecule type" value="Genomic_DNA"/>
</dbReference>
<dbReference type="RefSeq" id="XP_640407.1">
    <property type="nucleotide sequence ID" value="XM_635315.1"/>
</dbReference>
<dbReference type="PaxDb" id="44689-DDB0205087"/>
<dbReference type="EnsemblProtists" id="EAL66428">
    <property type="protein sequence ID" value="EAL66428"/>
    <property type="gene ID" value="DDB_G0282013"/>
</dbReference>
<dbReference type="GeneID" id="8623362"/>
<dbReference type="KEGG" id="ddi:DDB_G0282013"/>
<dbReference type="dictyBase" id="DDB_G0282013"/>
<dbReference type="VEuPathDB" id="AmoebaDB:DDB_G0282013"/>
<dbReference type="HOGENOM" id="CLU_2325112_0_0_1"/>
<dbReference type="InParanoid" id="Q54T44"/>
<dbReference type="PRO" id="PR:Q54T44"/>
<dbReference type="Proteomes" id="UP000002195">
    <property type="component" value="Chromosome 3"/>
</dbReference>
<reference key="1">
    <citation type="journal article" date="2005" name="Nature">
        <title>The genome of the social amoeba Dictyostelium discoideum.</title>
        <authorList>
            <person name="Eichinger L."/>
            <person name="Pachebat J.A."/>
            <person name="Gloeckner G."/>
            <person name="Rajandream M.A."/>
            <person name="Sucgang R."/>
            <person name="Berriman M."/>
            <person name="Song J."/>
            <person name="Olsen R."/>
            <person name="Szafranski K."/>
            <person name="Xu Q."/>
            <person name="Tunggal B."/>
            <person name="Kummerfeld S."/>
            <person name="Madera M."/>
            <person name="Konfortov B.A."/>
            <person name="Rivero F."/>
            <person name="Bankier A.T."/>
            <person name="Lehmann R."/>
            <person name="Hamlin N."/>
            <person name="Davies R."/>
            <person name="Gaudet P."/>
            <person name="Fey P."/>
            <person name="Pilcher K."/>
            <person name="Chen G."/>
            <person name="Saunders D."/>
            <person name="Sodergren E.J."/>
            <person name="Davis P."/>
            <person name="Kerhornou A."/>
            <person name="Nie X."/>
            <person name="Hall N."/>
            <person name="Anjard C."/>
            <person name="Hemphill L."/>
            <person name="Bason N."/>
            <person name="Farbrother P."/>
            <person name="Desany B."/>
            <person name="Just E."/>
            <person name="Morio T."/>
            <person name="Rost R."/>
            <person name="Churcher C.M."/>
            <person name="Cooper J."/>
            <person name="Haydock S."/>
            <person name="van Driessche N."/>
            <person name="Cronin A."/>
            <person name="Goodhead I."/>
            <person name="Muzny D.M."/>
            <person name="Mourier T."/>
            <person name="Pain A."/>
            <person name="Lu M."/>
            <person name="Harper D."/>
            <person name="Lindsay R."/>
            <person name="Hauser H."/>
            <person name="James K.D."/>
            <person name="Quiles M."/>
            <person name="Madan Babu M."/>
            <person name="Saito T."/>
            <person name="Buchrieser C."/>
            <person name="Wardroper A."/>
            <person name="Felder M."/>
            <person name="Thangavelu M."/>
            <person name="Johnson D."/>
            <person name="Knights A."/>
            <person name="Loulseged H."/>
            <person name="Mungall K.L."/>
            <person name="Oliver K."/>
            <person name="Price C."/>
            <person name="Quail M.A."/>
            <person name="Urushihara H."/>
            <person name="Hernandez J."/>
            <person name="Rabbinowitsch E."/>
            <person name="Steffen D."/>
            <person name="Sanders M."/>
            <person name="Ma J."/>
            <person name="Kohara Y."/>
            <person name="Sharp S."/>
            <person name="Simmonds M.N."/>
            <person name="Spiegler S."/>
            <person name="Tivey A."/>
            <person name="Sugano S."/>
            <person name="White B."/>
            <person name="Walker D."/>
            <person name="Woodward J.R."/>
            <person name="Winckler T."/>
            <person name="Tanaka Y."/>
            <person name="Shaulsky G."/>
            <person name="Schleicher M."/>
            <person name="Weinstock G.M."/>
            <person name="Rosenthal A."/>
            <person name="Cox E.C."/>
            <person name="Chisholm R.L."/>
            <person name="Gibbs R.A."/>
            <person name="Loomis W.F."/>
            <person name="Platzer M."/>
            <person name="Kay R.R."/>
            <person name="Williams J.G."/>
            <person name="Dear P.H."/>
            <person name="Noegel A.A."/>
            <person name="Barrell B.G."/>
            <person name="Kuspa A."/>
        </authorList>
    </citation>
    <scope>NUCLEOTIDE SEQUENCE [LARGE SCALE GENOMIC DNA]</scope>
    <source>
        <strain>AX4</strain>
    </source>
</reference>